<keyword id="KW-0067">ATP-binding</keyword>
<keyword id="KW-0963">Cytoplasm</keyword>
<keyword id="KW-1015">Disulfide bond</keyword>
<keyword id="KW-0547">Nucleotide-binding</keyword>
<keyword id="KW-1185">Reference proteome</keyword>
<keyword id="KW-0694">RNA-binding</keyword>
<keyword id="KW-0808">Transferase</keyword>
<keyword id="KW-0819">tRNA processing</keyword>
<keyword id="KW-0820">tRNA-binding</keyword>
<evidence type="ECO:0000255" key="1">
    <source>
        <dbReference type="HAMAP-Rule" id="MF_00144"/>
    </source>
</evidence>
<name>MNMA_LIMRD</name>
<protein>
    <recommendedName>
        <fullName evidence="1">tRNA-specific 2-thiouridylase MnmA</fullName>
        <ecNumber evidence="1">2.8.1.13</ecNumber>
    </recommendedName>
</protein>
<comment type="function">
    <text evidence="1">Catalyzes the 2-thiolation of uridine at the wobble position (U34) of tRNA, leading to the formation of s(2)U34.</text>
</comment>
<comment type="catalytic activity">
    <reaction evidence="1">
        <text>S-sulfanyl-L-cysteinyl-[protein] + uridine(34) in tRNA + AH2 + ATP = 2-thiouridine(34) in tRNA + L-cysteinyl-[protein] + A + AMP + diphosphate + H(+)</text>
        <dbReference type="Rhea" id="RHEA:47032"/>
        <dbReference type="Rhea" id="RHEA-COMP:10131"/>
        <dbReference type="Rhea" id="RHEA-COMP:11726"/>
        <dbReference type="Rhea" id="RHEA-COMP:11727"/>
        <dbReference type="Rhea" id="RHEA-COMP:11728"/>
        <dbReference type="ChEBI" id="CHEBI:13193"/>
        <dbReference type="ChEBI" id="CHEBI:15378"/>
        <dbReference type="ChEBI" id="CHEBI:17499"/>
        <dbReference type="ChEBI" id="CHEBI:29950"/>
        <dbReference type="ChEBI" id="CHEBI:30616"/>
        <dbReference type="ChEBI" id="CHEBI:33019"/>
        <dbReference type="ChEBI" id="CHEBI:61963"/>
        <dbReference type="ChEBI" id="CHEBI:65315"/>
        <dbReference type="ChEBI" id="CHEBI:87170"/>
        <dbReference type="ChEBI" id="CHEBI:456215"/>
        <dbReference type="EC" id="2.8.1.13"/>
    </reaction>
</comment>
<comment type="subcellular location">
    <subcellularLocation>
        <location evidence="1">Cytoplasm</location>
    </subcellularLocation>
</comment>
<comment type="similarity">
    <text evidence="1">Belongs to the MnmA/TRMU family.</text>
</comment>
<reference key="1">
    <citation type="journal article" date="2011" name="PLoS Genet.">
        <title>The evolution of host specialization in the vertebrate gut symbiont Lactobacillus reuteri.</title>
        <authorList>
            <person name="Frese S.A."/>
            <person name="Benson A.K."/>
            <person name="Tannock G.W."/>
            <person name="Loach D.M."/>
            <person name="Kim J."/>
            <person name="Zhang M."/>
            <person name="Oh P.L."/>
            <person name="Heng N.C."/>
            <person name="Patil P.B."/>
            <person name="Juge N."/>
            <person name="Mackenzie D.A."/>
            <person name="Pearson B.M."/>
            <person name="Lapidus A."/>
            <person name="Dalin E."/>
            <person name="Tice H."/>
            <person name="Goltsman E."/>
            <person name="Land M."/>
            <person name="Hauser L."/>
            <person name="Ivanova N."/>
            <person name="Kyrpides N.C."/>
            <person name="Walter J."/>
        </authorList>
    </citation>
    <scope>NUCLEOTIDE SEQUENCE [LARGE SCALE GENOMIC DNA]</scope>
    <source>
        <strain>DSM 20016</strain>
    </source>
</reference>
<proteinExistence type="inferred from homology"/>
<accession>A5VJ48</accession>
<sequence length="377" mass="42769">MADNSHTRVVVGMSGGVDSSVTALLLKRQGYDVVGVFMKNWDDTDENGVCTATEDYKDVAKVASKIGIPYYSVNFEKEYWDRVFKYFIAEYKKGRTPNPDVICNKEIKFKAFIEYANQLGADYVATGHYADVKRDENGRMHLMRAKDQHKDQTYFLSQLDYKQLDKVMFPLAGYTKPEIRKIAEEAGLATADKKDSVGICFIGEDGHFREFLSQYIPAQPGNMETLDGKVVGQHMGLMYYTIGQRRGLGLGGNKESNEPWFVIGKDMKKNVLYVGQGYENSHLYATHLEASDIHWVDDVVSRYGRDFHCTAKFRYRQTDVGVTVHLSDDDQMVTVEFDDPARAITPGQAVVFYDGEECLGSAIIDRAYSHDRQLQYV</sequence>
<feature type="chain" id="PRO_1000057947" description="tRNA-specific 2-thiouridylase MnmA">
    <location>
        <begin position="1"/>
        <end position="377"/>
    </location>
</feature>
<feature type="region of interest" description="Interaction with target base in tRNA" evidence="1">
    <location>
        <begin position="98"/>
        <end position="100"/>
    </location>
</feature>
<feature type="region of interest" description="Interaction with tRNA" evidence="1">
    <location>
        <begin position="150"/>
        <end position="152"/>
    </location>
</feature>
<feature type="region of interest" description="Interaction with tRNA" evidence="1">
    <location>
        <begin position="314"/>
        <end position="315"/>
    </location>
</feature>
<feature type="active site" description="Nucleophile" evidence="1">
    <location>
        <position position="103"/>
    </location>
</feature>
<feature type="active site" description="Cysteine persulfide intermediate" evidence="1">
    <location>
        <position position="200"/>
    </location>
</feature>
<feature type="binding site" evidence="1">
    <location>
        <begin position="12"/>
        <end position="19"/>
    </location>
    <ligand>
        <name>ATP</name>
        <dbReference type="ChEBI" id="CHEBI:30616"/>
    </ligand>
</feature>
<feature type="binding site" evidence="1">
    <location>
        <position position="38"/>
    </location>
    <ligand>
        <name>ATP</name>
        <dbReference type="ChEBI" id="CHEBI:30616"/>
    </ligand>
</feature>
<feature type="binding site" evidence="1">
    <location>
        <position position="127"/>
    </location>
    <ligand>
        <name>ATP</name>
        <dbReference type="ChEBI" id="CHEBI:30616"/>
    </ligand>
</feature>
<feature type="site" description="Interaction with tRNA" evidence="1">
    <location>
        <position position="128"/>
    </location>
</feature>
<feature type="site" description="Interaction with tRNA" evidence="1">
    <location>
        <position position="348"/>
    </location>
</feature>
<feature type="disulfide bond" description="Alternate" evidence="1">
    <location>
        <begin position="103"/>
        <end position="200"/>
    </location>
</feature>
<dbReference type="EC" id="2.8.1.13" evidence="1"/>
<dbReference type="EMBL" id="CP000705">
    <property type="protein sequence ID" value="ABQ82872.1"/>
    <property type="molecule type" value="Genomic_DNA"/>
</dbReference>
<dbReference type="RefSeq" id="WP_003668307.1">
    <property type="nucleotide sequence ID" value="NZ_AZDD01000002.1"/>
</dbReference>
<dbReference type="SMR" id="A5VJ48"/>
<dbReference type="STRING" id="557436.Lreu_0605"/>
<dbReference type="GeneID" id="77190715"/>
<dbReference type="KEGG" id="lre:Lreu_0605"/>
<dbReference type="PATRIC" id="fig|557436.17.peg.677"/>
<dbReference type="eggNOG" id="COG0482">
    <property type="taxonomic scope" value="Bacteria"/>
</dbReference>
<dbReference type="HOGENOM" id="CLU_035188_1_0_9"/>
<dbReference type="Proteomes" id="UP000001991">
    <property type="component" value="Chromosome"/>
</dbReference>
<dbReference type="GO" id="GO:0005737">
    <property type="term" value="C:cytoplasm"/>
    <property type="evidence" value="ECO:0007669"/>
    <property type="project" value="UniProtKB-SubCell"/>
</dbReference>
<dbReference type="GO" id="GO:0005524">
    <property type="term" value="F:ATP binding"/>
    <property type="evidence" value="ECO:0007669"/>
    <property type="project" value="UniProtKB-KW"/>
</dbReference>
<dbReference type="GO" id="GO:0000049">
    <property type="term" value="F:tRNA binding"/>
    <property type="evidence" value="ECO:0007669"/>
    <property type="project" value="UniProtKB-KW"/>
</dbReference>
<dbReference type="GO" id="GO:0103016">
    <property type="term" value="F:tRNA-uridine 2-sulfurtransferase activity"/>
    <property type="evidence" value="ECO:0007669"/>
    <property type="project" value="UniProtKB-EC"/>
</dbReference>
<dbReference type="GO" id="GO:0002143">
    <property type="term" value="P:tRNA wobble position uridine thiolation"/>
    <property type="evidence" value="ECO:0007669"/>
    <property type="project" value="TreeGrafter"/>
</dbReference>
<dbReference type="CDD" id="cd01998">
    <property type="entry name" value="MnmA_TRMU-like"/>
    <property type="match status" value="1"/>
</dbReference>
<dbReference type="FunFam" id="2.30.30.280:FF:000001">
    <property type="entry name" value="tRNA-specific 2-thiouridylase MnmA"/>
    <property type="match status" value="1"/>
</dbReference>
<dbReference type="FunFam" id="2.40.30.10:FF:000023">
    <property type="entry name" value="tRNA-specific 2-thiouridylase MnmA"/>
    <property type="match status" value="1"/>
</dbReference>
<dbReference type="FunFam" id="3.40.50.620:FF:000004">
    <property type="entry name" value="tRNA-specific 2-thiouridylase MnmA"/>
    <property type="match status" value="1"/>
</dbReference>
<dbReference type="Gene3D" id="2.30.30.280">
    <property type="entry name" value="Adenine nucleotide alpha hydrolases-like domains"/>
    <property type="match status" value="1"/>
</dbReference>
<dbReference type="Gene3D" id="3.40.50.620">
    <property type="entry name" value="HUPs"/>
    <property type="match status" value="1"/>
</dbReference>
<dbReference type="Gene3D" id="2.40.30.10">
    <property type="entry name" value="Translation factors"/>
    <property type="match status" value="1"/>
</dbReference>
<dbReference type="HAMAP" id="MF_00144">
    <property type="entry name" value="tRNA_thiouridyl_MnmA"/>
    <property type="match status" value="1"/>
</dbReference>
<dbReference type="InterPro" id="IPR004506">
    <property type="entry name" value="MnmA-like"/>
</dbReference>
<dbReference type="InterPro" id="IPR046885">
    <property type="entry name" value="MnmA-like_C"/>
</dbReference>
<dbReference type="InterPro" id="IPR046884">
    <property type="entry name" value="MnmA-like_central"/>
</dbReference>
<dbReference type="InterPro" id="IPR023382">
    <property type="entry name" value="MnmA-like_central_sf"/>
</dbReference>
<dbReference type="InterPro" id="IPR014729">
    <property type="entry name" value="Rossmann-like_a/b/a_fold"/>
</dbReference>
<dbReference type="NCBIfam" id="NF001138">
    <property type="entry name" value="PRK00143.1"/>
    <property type="match status" value="1"/>
</dbReference>
<dbReference type="NCBIfam" id="TIGR00420">
    <property type="entry name" value="trmU"/>
    <property type="match status" value="1"/>
</dbReference>
<dbReference type="PANTHER" id="PTHR11933:SF5">
    <property type="entry name" value="MITOCHONDRIAL TRNA-SPECIFIC 2-THIOURIDYLASE 1"/>
    <property type="match status" value="1"/>
</dbReference>
<dbReference type="PANTHER" id="PTHR11933">
    <property type="entry name" value="TRNA 5-METHYLAMINOMETHYL-2-THIOURIDYLATE -METHYLTRANSFERASE"/>
    <property type="match status" value="1"/>
</dbReference>
<dbReference type="Pfam" id="PF03054">
    <property type="entry name" value="tRNA_Me_trans"/>
    <property type="match status" value="1"/>
</dbReference>
<dbReference type="Pfam" id="PF20258">
    <property type="entry name" value="tRNA_Me_trans_C"/>
    <property type="match status" value="1"/>
</dbReference>
<dbReference type="Pfam" id="PF20259">
    <property type="entry name" value="tRNA_Me_trans_M"/>
    <property type="match status" value="1"/>
</dbReference>
<dbReference type="SUPFAM" id="SSF52402">
    <property type="entry name" value="Adenine nucleotide alpha hydrolases-like"/>
    <property type="match status" value="1"/>
</dbReference>
<gene>
    <name evidence="1" type="primary">mnmA</name>
    <name type="synonym">trmU</name>
    <name type="ordered locus">Lreu_0605</name>
</gene>
<organism>
    <name type="scientific">Limosilactobacillus reuteri (strain DSM 20016)</name>
    <name type="common">Lactobacillus reuteri</name>
    <dbReference type="NCBI Taxonomy" id="557436"/>
    <lineage>
        <taxon>Bacteria</taxon>
        <taxon>Bacillati</taxon>
        <taxon>Bacillota</taxon>
        <taxon>Bacilli</taxon>
        <taxon>Lactobacillales</taxon>
        <taxon>Lactobacillaceae</taxon>
        <taxon>Limosilactobacillus</taxon>
    </lineage>
</organism>